<reference key="1">
    <citation type="journal article" date="2001" name="Science">
        <title>The genome of the natural genetic engineer Agrobacterium tumefaciens C58.</title>
        <authorList>
            <person name="Wood D.W."/>
            <person name="Setubal J.C."/>
            <person name="Kaul R."/>
            <person name="Monks D.E."/>
            <person name="Kitajima J.P."/>
            <person name="Okura V.K."/>
            <person name="Zhou Y."/>
            <person name="Chen L."/>
            <person name="Wood G.E."/>
            <person name="Almeida N.F. Jr."/>
            <person name="Woo L."/>
            <person name="Chen Y."/>
            <person name="Paulsen I.T."/>
            <person name="Eisen J.A."/>
            <person name="Karp P.D."/>
            <person name="Bovee D. Sr."/>
            <person name="Chapman P."/>
            <person name="Clendenning J."/>
            <person name="Deatherage G."/>
            <person name="Gillet W."/>
            <person name="Grant C."/>
            <person name="Kutyavin T."/>
            <person name="Levy R."/>
            <person name="Li M.-J."/>
            <person name="McClelland E."/>
            <person name="Palmieri A."/>
            <person name="Raymond C."/>
            <person name="Rouse G."/>
            <person name="Saenphimmachak C."/>
            <person name="Wu Z."/>
            <person name="Romero P."/>
            <person name="Gordon D."/>
            <person name="Zhang S."/>
            <person name="Yoo H."/>
            <person name="Tao Y."/>
            <person name="Biddle P."/>
            <person name="Jung M."/>
            <person name="Krespan W."/>
            <person name="Perry M."/>
            <person name="Gordon-Kamm B."/>
            <person name="Liao L."/>
            <person name="Kim S."/>
            <person name="Hendrick C."/>
            <person name="Zhao Z.-Y."/>
            <person name="Dolan M."/>
            <person name="Chumley F."/>
            <person name="Tingey S.V."/>
            <person name="Tomb J.-F."/>
            <person name="Gordon M.P."/>
            <person name="Olson M.V."/>
            <person name="Nester E.W."/>
        </authorList>
    </citation>
    <scope>NUCLEOTIDE SEQUENCE [LARGE SCALE GENOMIC DNA]</scope>
    <source>
        <strain>C58 / ATCC 33970</strain>
    </source>
</reference>
<reference key="2">
    <citation type="journal article" date="2001" name="Science">
        <title>Genome sequence of the plant pathogen and biotechnology agent Agrobacterium tumefaciens C58.</title>
        <authorList>
            <person name="Goodner B."/>
            <person name="Hinkle G."/>
            <person name="Gattung S."/>
            <person name="Miller N."/>
            <person name="Blanchard M."/>
            <person name="Qurollo B."/>
            <person name="Goldman B.S."/>
            <person name="Cao Y."/>
            <person name="Askenazi M."/>
            <person name="Halling C."/>
            <person name="Mullin L."/>
            <person name="Houmiel K."/>
            <person name="Gordon J."/>
            <person name="Vaudin M."/>
            <person name="Iartchouk O."/>
            <person name="Epp A."/>
            <person name="Liu F."/>
            <person name="Wollam C."/>
            <person name="Allinger M."/>
            <person name="Doughty D."/>
            <person name="Scott C."/>
            <person name="Lappas C."/>
            <person name="Markelz B."/>
            <person name="Flanagan C."/>
            <person name="Crowell C."/>
            <person name="Gurson J."/>
            <person name="Lomo C."/>
            <person name="Sear C."/>
            <person name="Strub G."/>
            <person name="Cielo C."/>
            <person name="Slater S."/>
        </authorList>
    </citation>
    <scope>NUCLEOTIDE SEQUENCE [LARGE SCALE GENOMIC DNA]</scope>
    <source>
        <strain>C58 / ATCC 33970</strain>
    </source>
</reference>
<organism>
    <name type="scientific">Agrobacterium fabrum (strain C58 / ATCC 33970)</name>
    <name type="common">Agrobacterium tumefaciens (strain C58)</name>
    <dbReference type="NCBI Taxonomy" id="176299"/>
    <lineage>
        <taxon>Bacteria</taxon>
        <taxon>Pseudomonadati</taxon>
        <taxon>Pseudomonadota</taxon>
        <taxon>Alphaproteobacteria</taxon>
        <taxon>Hyphomicrobiales</taxon>
        <taxon>Rhizobiaceae</taxon>
        <taxon>Rhizobium/Agrobacterium group</taxon>
        <taxon>Agrobacterium</taxon>
        <taxon>Agrobacterium tumefaciens complex</taxon>
    </lineage>
</organism>
<gene>
    <name evidence="1" type="primary">coaD</name>
    <name type="ordered locus">Atu1681</name>
    <name type="ORF">AGR_C_3091</name>
</gene>
<evidence type="ECO:0000255" key="1">
    <source>
        <dbReference type="HAMAP-Rule" id="MF_00151"/>
    </source>
</evidence>
<accession>Q8UES4</accession>
<name>COAD_AGRFC</name>
<keyword id="KW-0067">ATP-binding</keyword>
<keyword id="KW-0173">Coenzyme A biosynthesis</keyword>
<keyword id="KW-0963">Cytoplasm</keyword>
<keyword id="KW-0460">Magnesium</keyword>
<keyword id="KW-0547">Nucleotide-binding</keyword>
<keyword id="KW-0548">Nucleotidyltransferase</keyword>
<keyword id="KW-1185">Reference proteome</keyword>
<keyword id="KW-0808">Transferase</keyword>
<feature type="chain" id="PRO_0000156158" description="Phosphopantetheine adenylyltransferase">
    <location>
        <begin position="1"/>
        <end position="164"/>
    </location>
</feature>
<feature type="binding site" evidence="1">
    <location>
        <begin position="9"/>
        <end position="10"/>
    </location>
    <ligand>
        <name>ATP</name>
        <dbReference type="ChEBI" id="CHEBI:30616"/>
    </ligand>
</feature>
<feature type="binding site" evidence="1">
    <location>
        <position position="9"/>
    </location>
    <ligand>
        <name>substrate</name>
    </ligand>
</feature>
<feature type="binding site" evidence="1">
    <location>
        <position position="17"/>
    </location>
    <ligand>
        <name>ATP</name>
        <dbReference type="ChEBI" id="CHEBI:30616"/>
    </ligand>
</feature>
<feature type="binding site" evidence="1">
    <location>
        <position position="41"/>
    </location>
    <ligand>
        <name>substrate</name>
    </ligand>
</feature>
<feature type="binding site" evidence="1">
    <location>
        <position position="78"/>
    </location>
    <ligand>
        <name>substrate</name>
    </ligand>
</feature>
<feature type="binding site" evidence="1">
    <location>
        <position position="92"/>
    </location>
    <ligand>
        <name>substrate</name>
    </ligand>
</feature>
<feature type="binding site" evidence="1">
    <location>
        <begin position="93"/>
        <end position="95"/>
    </location>
    <ligand>
        <name>ATP</name>
        <dbReference type="ChEBI" id="CHEBI:30616"/>
    </ligand>
</feature>
<feature type="binding site" evidence="1">
    <location>
        <position position="103"/>
    </location>
    <ligand>
        <name>ATP</name>
        <dbReference type="ChEBI" id="CHEBI:30616"/>
    </ligand>
</feature>
<feature type="binding site" evidence="1">
    <location>
        <begin position="128"/>
        <end position="134"/>
    </location>
    <ligand>
        <name>ATP</name>
        <dbReference type="ChEBI" id="CHEBI:30616"/>
    </ligand>
</feature>
<feature type="site" description="Transition state stabilizer" evidence="1">
    <location>
        <position position="17"/>
    </location>
</feature>
<dbReference type="EC" id="2.7.7.3" evidence="1"/>
<dbReference type="EMBL" id="AE007869">
    <property type="protein sequence ID" value="AAK87453.1"/>
    <property type="molecule type" value="Genomic_DNA"/>
</dbReference>
<dbReference type="PIR" id="AC2783">
    <property type="entry name" value="AC2783"/>
</dbReference>
<dbReference type="PIR" id="D97562">
    <property type="entry name" value="D97562"/>
</dbReference>
<dbReference type="RefSeq" id="NP_354668.1">
    <property type="nucleotide sequence ID" value="NC_003062.2"/>
</dbReference>
<dbReference type="RefSeq" id="WP_010971796.1">
    <property type="nucleotide sequence ID" value="NC_003062.2"/>
</dbReference>
<dbReference type="SMR" id="Q8UES4"/>
<dbReference type="STRING" id="176299.Atu1681"/>
<dbReference type="EnsemblBacteria" id="AAK87453">
    <property type="protein sequence ID" value="AAK87453"/>
    <property type="gene ID" value="Atu1681"/>
</dbReference>
<dbReference type="GeneID" id="1133719"/>
<dbReference type="KEGG" id="atu:Atu1681"/>
<dbReference type="PATRIC" id="fig|176299.10.peg.1698"/>
<dbReference type="eggNOG" id="COG0669">
    <property type="taxonomic scope" value="Bacteria"/>
</dbReference>
<dbReference type="HOGENOM" id="CLU_100149_0_1_5"/>
<dbReference type="OrthoDB" id="9806661at2"/>
<dbReference type="PhylomeDB" id="Q8UES4"/>
<dbReference type="BioCyc" id="AGRO:ATU1681-MONOMER"/>
<dbReference type="UniPathway" id="UPA00241">
    <property type="reaction ID" value="UER00355"/>
</dbReference>
<dbReference type="Proteomes" id="UP000000813">
    <property type="component" value="Chromosome circular"/>
</dbReference>
<dbReference type="GO" id="GO:0005737">
    <property type="term" value="C:cytoplasm"/>
    <property type="evidence" value="ECO:0007669"/>
    <property type="project" value="UniProtKB-SubCell"/>
</dbReference>
<dbReference type="GO" id="GO:0005524">
    <property type="term" value="F:ATP binding"/>
    <property type="evidence" value="ECO:0007669"/>
    <property type="project" value="UniProtKB-KW"/>
</dbReference>
<dbReference type="GO" id="GO:0004595">
    <property type="term" value="F:pantetheine-phosphate adenylyltransferase activity"/>
    <property type="evidence" value="ECO:0007669"/>
    <property type="project" value="UniProtKB-UniRule"/>
</dbReference>
<dbReference type="GO" id="GO:0015937">
    <property type="term" value="P:coenzyme A biosynthetic process"/>
    <property type="evidence" value="ECO:0007669"/>
    <property type="project" value="UniProtKB-UniRule"/>
</dbReference>
<dbReference type="CDD" id="cd02163">
    <property type="entry name" value="PPAT"/>
    <property type="match status" value="1"/>
</dbReference>
<dbReference type="Gene3D" id="3.40.50.620">
    <property type="entry name" value="HUPs"/>
    <property type="match status" value="1"/>
</dbReference>
<dbReference type="HAMAP" id="MF_00151">
    <property type="entry name" value="PPAT_bact"/>
    <property type="match status" value="1"/>
</dbReference>
<dbReference type="InterPro" id="IPR004821">
    <property type="entry name" value="Cyt_trans-like"/>
</dbReference>
<dbReference type="InterPro" id="IPR001980">
    <property type="entry name" value="PPAT"/>
</dbReference>
<dbReference type="InterPro" id="IPR014729">
    <property type="entry name" value="Rossmann-like_a/b/a_fold"/>
</dbReference>
<dbReference type="NCBIfam" id="TIGR01510">
    <property type="entry name" value="coaD_prev_kdtB"/>
    <property type="match status" value="1"/>
</dbReference>
<dbReference type="NCBIfam" id="TIGR00125">
    <property type="entry name" value="cyt_tran_rel"/>
    <property type="match status" value="1"/>
</dbReference>
<dbReference type="PANTHER" id="PTHR21342">
    <property type="entry name" value="PHOSPHOPANTETHEINE ADENYLYLTRANSFERASE"/>
    <property type="match status" value="1"/>
</dbReference>
<dbReference type="PANTHER" id="PTHR21342:SF1">
    <property type="entry name" value="PHOSPHOPANTETHEINE ADENYLYLTRANSFERASE"/>
    <property type="match status" value="1"/>
</dbReference>
<dbReference type="Pfam" id="PF01467">
    <property type="entry name" value="CTP_transf_like"/>
    <property type="match status" value="1"/>
</dbReference>
<dbReference type="PRINTS" id="PR01020">
    <property type="entry name" value="LPSBIOSNTHSS"/>
</dbReference>
<dbReference type="SUPFAM" id="SSF52374">
    <property type="entry name" value="Nucleotidylyl transferase"/>
    <property type="match status" value="1"/>
</dbReference>
<protein>
    <recommendedName>
        <fullName evidence="1">Phosphopantetheine adenylyltransferase</fullName>
        <ecNumber evidence="1">2.7.7.3</ecNumber>
    </recommendedName>
    <alternativeName>
        <fullName evidence="1">Dephospho-CoA pyrophosphorylase</fullName>
    </alternativeName>
    <alternativeName>
        <fullName evidence="1">Pantetheine-phosphate adenylyltransferase</fullName>
        <shortName evidence="1">PPAT</shortName>
    </alternativeName>
</protein>
<sequence length="164" mass="17551">MTIAFYPGSFDPMTNGHLDVLIQALNVASKVIVAVGIHPGKAPLFSFDERAALISRALSETLPGEAARVEVVSFDNLVVDAARQHGAHLLLRGLRDGTDLDYEMQMAGMNRQMAPDIQTVFLPAGTSSRPITATLVRQIAAMGGNVDAFVPKAVLEALNAKLKR</sequence>
<proteinExistence type="inferred from homology"/>
<comment type="function">
    <text evidence="1">Reversibly transfers an adenylyl group from ATP to 4'-phosphopantetheine, yielding dephospho-CoA (dPCoA) and pyrophosphate.</text>
</comment>
<comment type="catalytic activity">
    <reaction evidence="1">
        <text>(R)-4'-phosphopantetheine + ATP + H(+) = 3'-dephospho-CoA + diphosphate</text>
        <dbReference type="Rhea" id="RHEA:19801"/>
        <dbReference type="ChEBI" id="CHEBI:15378"/>
        <dbReference type="ChEBI" id="CHEBI:30616"/>
        <dbReference type="ChEBI" id="CHEBI:33019"/>
        <dbReference type="ChEBI" id="CHEBI:57328"/>
        <dbReference type="ChEBI" id="CHEBI:61723"/>
        <dbReference type="EC" id="2.7.7.3"/>
    </reaction>
</comment>
<comment type="cofactor">
    <cofactor evidence="1">
        <name>Mg(2+)</name>
        <dbReference type="ChEBI" id="CHEBI:18420"/>
    </cofactor>
</comment>
<comment type="pathway">
    <text evidence="1">Cofactor biosynthesis; coenzyme A biosynthesis; CoA from (R)-pantothenate: step 4/5.</text>
</comment>
<comment type="subunit">
    <text evidence="1">Homohexamer.</text>
</comment>
<comment type="subcellular location">
    <subcellularLocation>
        <location evidence="1">Cytoplasm</location>
    </subcellularLocation>
</comment>
<comment type="similarity">
    <text evidence="1">Belongs to the bacterial CoaD family.</text>
</comment>